<keyword id="KW-1015">Disulfide bond</keyword>
<keyword id="KW-0372">Hormone</keyword>
<keyword id="KW-1185">Reference proteome</keyword>
<keyword id="KW-0964">Secreted</keyword>
<keyword id="KW-0732">Signal</keyword>
<protein>
    <recommendedName>
        <fullName>Protein RALF-like 17</fullName>
    </recommendedName>
</protein>
<accession>O48776</accession>
<dbReference type="EMBL" id="AC003033">
    <property type="protein sequence ID" value="AAB91978.1"/>
    <property type="molecule type" value="Genomic_DNA"/>
</dbReference>
<dbReference type="EMBL" id="CP002685">
    <property type="protein sequence ID" value="AEC08758.1"/>
    <property type="molecule type" value="Genomic_DNA"/>
</dbReference>
<dbReference type="EMBL" id="EF182850">
    <property type="status" value="NOT_ANNOTATED_CDS"/>
    <property type="molecule type" value="mRNA"/>
</dbReference>
<dbReference type="PIR" id="T01118">
    <property type="entry name" value="T01118"/>
</dbReference>
<dbReference type="RefSeq" id="NP_180848.1">
    <property type="nucleotide sequence ID" value="NM_128849.2"/>
</dbReference>
<dbReference type="FunCoup" id="O48776">
    <property type="interactions" value="24"/>
</dbReference>
<dbReference type="STRING" id="3702.O48776"/>
<dbReference type="PaxDb" id="3702-AT2G32890.1"/>
<dbReference type="ProteomicsDB" id="226897"/>
<dbReference type="EnsemblPlants" id="AT2G32890.1">
    <property type="protein sequence ID" value="AT2G32890.1"/>
    <property type="gene ID" value="AT2G32890"/>
</dbReference>
<dbReference type="GeneID" id="817850"/>
<dbReference type="Gramene" id="AT2G32890.1">
    <property type="protein sequence ID" value="AT2G32890.1"/>
    <property type="gene ID" value="AT2G32890"/>
</dbReference>
<dbReference type="KEGG" id="ath:AT2G32890"/>
<dbReference type="Araport" id="AT2G32890"/>
<dbReference type="TAIR" id="AT2G32890">
    <property type="gene designation" value="RALFL17"/>
</dbReference>
<dbReference type="eggNOG" id="ENOG502R38A">
    <property type="taxonomic scope" value="Eukaryota"/>
</dbReference>
<dbReference type="HOGENOM" id="CLU_199295_0_0_1"/>
<dbReference type="InParanoid" id="O48776"/>
<dbReference type="OMA" id="FIICCFL"/>
<dbReference type="PRO" id="PR:O48776"/>
<dbReference type="Proteomes" id="UP000006548">
    <property type="component" value="Chromosome 2"/>
</dbReference>
<dbReference type="ExpressionAtlas" id="O48776">
    <property type="expression patterns" value="baseline and differential"/>
</dbReference>
<dbReference type="GO" id="GO:0048046">
    <property type="term" value="C:apoplast"/>
    <property type="evidence" value="ECO:0000250"/>
    <property type="project" value="TAIR"/>
</dbReference>
<dbReference type="GO" id="GO:0005179">
    <property type="term" value="F:hormone activity"/>
    <property type="evidence" value="ECO:0000250"/>
    <property type="project" value="UniProtKB"/>
</dbReference>
<dbReference type="GO" id="GO:0019722">
    <property type="term" value="P:calcium-mediated signaling"/>
    <property type="evidence" value="ECO:0000250"/>
    <property type="project" value="UniProtKB"/>
</dbReference>
<dbReference type="GO" id="GO:0007267">
    <property type="term" value="P:cell-cell signaling"/>
    <property type="evidence" value="ECO:0000250"/>
    <property type="project" value="TAIR"/>
</dbReference>
<reference key="1">
    <citation type="journal article" date="1999" name="Nature">
        <title>Sequence and analysis of chromosome 2 of the plant Arabidopsis thaliana.</title>
        <authorList>
            <person name="Lin X."/>
            <person name="Kaul S."/>
            <person name="Rounsley S.D."/>
            <person name="Shea T.P."/>
            <person name="Benito M.-I."/>
            <person name="Town C.D."/>
            <person name="Fujii C.Y."/>
            <person name="Mason T.M."/>
            <person name="Bowman C.L."/>
            <person name="Barnstead M.E."/>
            <person name="Feldblyum T.V."/>
            <person name="Buell C.R."/>
            <person name="Ketchum K.A."/>
            <person name="Lee J.J."/>
            <person name="Ronning C.M."/>
            <person name="Koo H.L."/>
            <person name="Moffat K.S."/>
            <person name="Cronin L.A."/>
            <person name="Shen M."/>
            <person name="Pai G."/>
            <person name="Van Aken S."/>
            <person name="Umayam L."/>
            <person name="Tallon L.J."/>
            <person name="Gill J.E."/>
            <person name="Adams M.D."/>
            <person name="Carrera A.J."/>
            <person name="Creasy T.H."/>
            <person name="Goodman H.M."/>
            <person name="Somerville C.R."/>
            <person name="Copenhaver G.P."/>
            <person name="Preuss D."/>
            <person name="Nierman W.C."/>
            <person name="White O."/>
            <person name="Eisen J.A."/>
            <person name="Salzberg S.L."/>
            <person name="Fraser C.M."/>
            <person name="Venter J.C."/>
        </authorList>
    </citation>
    <scope>NUCLEOTIDE SEQUENCE [LARGE SCALE GENOMIC DNA]</scope>
    <source>
        <strain>cv. Columbia</strain>
    </source>
</reference>
<reference key="2">
    <citation type="journal article" date="2017" name="Plant J.">
        <title>Araport11: a complete reannotation of the Arabidopsis thaliana reference genome.</title>
        <authorList>
            <person name="Cheng C.Y."/>
            <person name="Krishnakumar V."/>
            <person name="Chan A.P."/>
            <person name="Thibaud-Nissen F."/>
            <person name="Schobel S."/>
            <person name="Town C.D."/>
        </authorList>
    </citation>
    <scope>GENOME REANNOTATION</scope>
    <source>
        <strain>cv. Columbia</strain>
    </source>
</reference>
<reference key="3">
    <citation type="journal article" date="2006" name="Plant Biotechnol. J.">
        <title>Simultaneous high-throughput recombinational cloning of open reading frames in closed and open configurations.</title>
        <authorList>
            <person name="Underwood B.A."/>
            <person name="Vanderhaeghen R."/>
            <person name="Whitford R."/>
            <person name="Town C.D."/>
            <person name="Hilson P."/>
        </authorList>
    </citation>
    <scope>NUCLEOTIDE SEQUENCE [LARGE SCALE MRNA]</scope>
    <source>
        <strain>cv. Columbia</strain>
    </source>
</reference>
<reference key="4">
    <citation type="journal article" date="2002" name="In Silico Biol.">
        <title>Peptomics, identification of novel cationic Arabidopsis peptides with conserved sequence motifs.</title>
        <authorList>
            <person name="Olsen A.N."/>
            <person name="Mundy J."/>
            <person name="Skriver K."/>
        </authorList>
    </citation>
    <scope>GENE FAMILY</scope>
    <scope>NOMENCLATURE</scope>
</reference>
<comment type="function">
    <text evidence="1">Cell signaling peptide that may regulate plant stress, growth, and development. Mediates a rapid alkalinization of extracellular space by mediating a transient increase in the cytoplasmic Ca(2+) concentration leading to a calcium-dependent signaling events through a cell surface receptor and a concomitant activation of some intracellular mitogen-activated protein kinases (By similarity).</text>
</comment>
<comment type="subcellular location">
    <subcellularLocation>
        <location evidence="1">Secreted</location>
    </subcellularLocation>
</comment>
<comment type="similarity">
    <text evidence="3">Belongs to the plant rapid alkalinization factor (RALF) family.</text>
</comment>
<feature type="signal peptide" evidence="2">
    <location>
        <begin position="1"/>
        <end position="29"/>
    </location>
</feature>
<feature type="chain" id="PRO_0000420309" description="Protein RALF-like 17">
    <location>
        <begin position="30"/>
        <end position="77"/>
    </location>
</feature>
<feature type="disulfide bond" evidence="1">
    <location>
        <begin position="37"/>
        <end position="51"/>
    </location>
</feature>
<evidence type="ECO:0000250" key="1"/>
<evidence type="ECO:0000255" key="2"/>
<evidence type="ECO:0000305" key="3"/>
<sequence>MAASREFIICCFLTLLLCNFFMRVESGAAADVSRGGCGGGDGSLGDDNERCVEAVKEDDDDDVDDVYKVINKMRIYA</sequence>
<organism>
    <name type="scientific">Arabidopsis thaliana</name>
    <name type="common">Mouse-ear cress</name>
    <dbReference type="NCBI Taxonomy" id="3702"/>
    <lineage>
        <taxon>Eukaryota</taxon>
        <taxon>Viridiplantae</taxon>
        <taxon>Streptophyta</taxon>
        <taxon>Embryophyta</taxon>
        <taxon>Tracheophyta</taxon>
        <taxon>Spermatophyta</taxon>
        <taxon>Magnoliopsida</taxon>
        <taxon>eudicotyledons</taxon>
        <taxon>Gunneridae</taxon>
        <taxon>Pentapetalae</taxon>
        <taxon>rosids</taxon>
        <taxon>malvids</taxon>
        <taxon>Brassicales</taxon>
        <taxon>Brassicaceae</taxon>
        <taxon>Camelineae</taxon>
        <taxon>Arabidopsis</taxon>
    </lineage>
</organism>
<proteinExistence type="inferred from homology"/>
<gene>
    <name type="primary">RALFL17</name>
    <name type="ordered locus">At2g32890</name>
    <name type="ORF">T21L14.17</name>
</gene>
<name>RLF17_ARATH</name>